<accession>P83434</accession>
<name>NLTP1_VIGRR</name>
<evidence type="ECO:0000250" key="1">
    <source>
        <dbReference type="UniProtKB" id="P07597"/>
    </source>
</evidence>
<evidence type="ECO:0000269" key="2">
    <source>
    </source>
</evidence>
<evidence type="ECO:0000269" key="3">
    <source>
    </source>
</evidence>
<evidence type="ECO:0000305" key="4"/>
<evidence type="ECO:0000305" key="5">
    <source>
    </source>
</evidence>
<evidence type="ECO:0007744" key="6">
    <source>
        <dbReference type="PDB" id="1SIY"/>
    </source>
</evidence>
<evidence type="ECO:0007829" key="7">
    <source>
        <dbReference type="PDB" id="1SIY"/>
    </source>
</evidence>
<keyword id="KW-0002">3D-structure</keyword>
<keyword id="KW-0044">Antibiotic</keyword>
<keyword id="KW-0929">Antimicrobial</keyword>
<keyword id="KW-0903">Direct protein sequencing</keyword>
<keyword id="KW-1015">Disulfide bond</keyword>
<keyword id="KW-0295">Fungicide</keyword>
<keyword id="KW-0446">Lipid-binding</keyword>
<keyword id="KW-1185">Reference proteome</keyword>
<keyword id="KW-0813">Transport</keyword>
<dbReference type="PDB" id="1SIY">
    <property type="method" value="NMR"/>
    <property type="chains" value="A=1-91"/>
</dbReference>
<dbReference type="PDBsum" id="1SIY"/>
<dbReference type="SMR" id="P83434"/>
<dbReference type="STRING" id="3916.P83434"/>
<dbReference type="EvolutionaryTrace" id="P83434"/>
<dbReference type="Proteomes" id="UP000087766">
    <property type="component" value="Unplaced"/>
</dbReference>
<dbReference type="GO" id="GO:0008289">
    <property type="term" value="F:lipid binding"/>
    <property type="evidence" value="ECO:0000314"/>
    <property type="project" value="UniProtKB"/>
</dbReference>
<dbReference type="GO" id="GO:0050832">
    <property type="term" value="P:defense response to fungus"/>
    <property type="evidence" value="ECO:0000314"/>
    <property type="project" value="UniProtKB"/>
</dbReference>
<dbReference type="GO" id="GO:0050830">
    <property type="term" value="P:defense response to Gram-positive bacterium"/>
    <property type="evidence" value="ECO:0000314"/>
    <property type="project" value="UniProtKB"/>
</dbReference>
<dbReference type="GO" id="GO:0031640">
    <property type="term" value="P:killing of cells of another organism"/>
    <property type="evidence" value="ECO:0007669"/>
    <property type="project" value="UniProtKB-KW"/>
</dbReference>
<dbReference type="GO" id="GO:0006869">
    <property type="term" value="P:lipid transport"/>
    <property type="evidence" value="ECO:0000314"/>
    <property type="project" value="UniProtKB"/>
</dbReference>
<dbReference type="CDD" id="cd01960">
    <property type="entry name" value="nsLTP1"/>
    <property type="match status" value="1"/>
</dbReference>
<dbReference type="FunFam" id="1.10.110.10:FF:000002">
    <property type="entry name" value="Non-specific lipid-transfer protein"/>
    <property type="match status" value="1"/>
</dbReference>
<dbReference type="Gene3D" id="1.10.110.10">
    <property type="entry name" value="Plant lipid-transfer and hydrophobic proteins"/>
    <property type="match status" value="1"/>
</dbReference>
<dbReference type="InterPro" id="IPR036312">
    <property type="entry name" value="Bifun_inhib/LTP/seed_sf"/>
</dbReference>
<dbReference type="InterPro" id="IPR016140">
    <property type="entry name" value="Bifunc_inhib/LTP/seed_store"/>
</dbReference>
<dbReference type="InterPro" id="IPR000528">
    <property type="entry name" value="Plant_nsLTP"/>
</dbReference>
<dbReference type="PANTHER" id="PTHR33076">
    <property type="entry name" value="NON-SPECIFIC LIPID-TRANSFER PROTEIN 2-RELATED"/>
    <property type="match status" value="1"/>
</dbReference>
<dbReference type="Pfam" id="PF00234">
    <property type="entry name" value="Tryp_alpha_amyl"/>
    <property type="match status" value="1"/>
</dbReference>
<dbReference type="PRINTS" id="PR00382">
    <property type="entry name" value="LIPIDTRNSFER"/>
</dbReference>
<dbReference type="SMART" id="SM00499">
    <property type="entry name" value="AAI"/>
    <property type="match status" value="1"/>
</dbReference>
<dbReference type="SUPFAM" id="SSF47699">
    <property type="entry name" value="Bifunctional inhibitor/lipid-transfer protein/seed storage 2S albumin"/>
    <property type="match status" value="1"/>
</dbReference>
<dbReference type="PROSITE" id="PS00597">
    <property type="entry name" value="PLANT_LTP"/>
    <property type="match status" value="1"/>
</dbReference>
<proteinExistence type="evidence at protein level"/>
<sequence length="91" mass="9299">MTCGQVQGNLAQCIGFLQKGGVVPPSCCTGVKNILNSSRTTADRRAVCSCLKAAAGAVRGINPNNAEALPGKCGVNIPYKISTSTNCNSIN</sequence>
<comment type="function">
    <text evidence="2 3">Plant non-specific lipid-transfer proteins transfer phospholipids as well as galactolipids across membranes. May play a role in wax or cutin deposition in the cell walls of expanding epidermal cells and certain secretory tissues. Has antifungal activity against F.solani, F.oxysporum, P.aphanidermatum and S.rolfsii. Has antibacterial activity against the Gram-positive bacterium S.aureus but not against the Gram-negative bacterium S.typhimurium.</text>
</comment>
<comment type="subunit">
    <text evidence="3 4">Monomer.</text>
</comment>
<comment type="mass spectrometry" mass="9030.0" method="Electrospray" evidence="2"/>
<comment type="similarity">
    <text evidence="1">Belongs to the plant LTP family.</text>
</comment>
<feature type="chain" id="PRO_0000153875" description="Non-specific lipid-transfer protein 1">
    <location>
        <begin position="1"/>
        <end position="91"/>
    </location>
</feature>
<feature type="binding site" evidence="5">
    <location>
        <position position="44"/>
    </location>
    <ligand>
        <name>a 1,2-diacyl-sn-glycero-3-phosphocholine</name>
        <dbReference type="ChEBI" id="CHEBI:57643"/>
    </ligand>
</feature>
<feature type="binding site" evidence="5">
    <location>
        <position position="79"/>
    </location>
    <ligand>
        <name>a 1,2-diacyl-sn-glycero-3-phosphocholine</name>
        <dbReference type="ChEBI" id="CHEBI:57643"/>
    </ligand>
</feature>
<feature type="disulfide bond" evidence="3 6">
    <location>
        <begin position="3"/>
        <end position="50"/>
    </location>
</feature>
<feature type="disulfide bond">
    <location>
        <begin position="13"/>
        <end position="27"/>
    </location>
</feature>
<feature type="disulfide bond">
    <location>
        <begin position="28"/>
        <end position="73"/>
    </location>
</feature>
<feature type="disulfide bond">
    <location>
        <begin position="48"/>
        <end position="87"/>
    </location>
</feature>
<feature type="sequence conflict" description="In Ref. 2; AA sequence." evidence="4" ref="2">
    <original>Q</original>
    <variation>E</variation>
    <location>
        <position position="18"/>
    </location>
</feature>
<feature type="turn" evidence="7">
    <location>
        <begin position="3"/>
        <end position="6"/>
    </location>
</feature>
<feature type="helix" evidence="7">
    <location>
        <begin position="7"/>
        <end position="17"/>
    </location>
</feature>
<feature type="helix" evidence="7">
    <location>
        <begin position="25"/>
        <end position="35"/>
    </location>
</feature>
<feature type="turn" evidence="7">
    <location>
        <begin position="36"/>
        <end position="38"/>
    </location>
</feature>
<feature type="helix" evidence="7">
    <location>
        <begin position="42"/>
        <end position="54"/>
    </location>
</feature>
<feature type="helix" evidence="7">
    <location>
        <begin position="63"/>
        <end position="73"/>
    </location>
</feature>
<protein>
    <recommendedName>
        <fullName>Non-specific lipid-transfer protein 1</fullName>
        <shortName>LTP 1</shortName>
        <shortName>NS-LTP1</shortName>
    </recommendedName>
</protein>
<reference key="1">
    <citation type="journal article" date="2005" name="Biochemistry">
        <title>Characterization and structural analyses of nonspecific lipid transfer protein 1 from mung bean.</title>
        <authorList>
            <person name="Lin K.-F."/>
            <person name="Liu Y.-N."/>
            <person name="Hsu S.-T."/>
            <person name="Samuel D."/>
            <person name="Cheng C.-S."/>
            <person name="Bonvin A.M."/>
            <person name="Lyu P.-C."/>
        </authorList>
    </citation>
    <scope>PROTEIN SEQUENCE</scope>
    <scope>FUNCTION</scope>
    <scope>SUBUNIT</scope>
    <scope>STRUCTURE BY NMR</scope>
    <scope>DISULFIDE BONDS</scope>
    <source>
        <tissue>Sprout</tissue>
    </source>
</reference>
<reference key="2">
    <citation type="journal article" date="2004" name="Peptides">
        <title>A non-specific lipid transfer protein with antifungal and antibacterial activities from the mung bean.</title>
        <authorList>
            <person name="Wang S.Y."/>
            <person name="Wu J.H."/>
            <person name="Ng T.B."/>
            <person name="Ye X.Y."/>
            <person name="Rao P.F."/>
        </authorList>
    </citation>
    <scope>PROTEIN SEQUENCE OF 1-21</scope>
    <scope>FUNCTION</scope>
    <scope>MASS SPECTROMETRY</scope>
    <source>
        <tissue>Seed</tissue>
    </source>
</reference>
<organism evidence="4">
    <name type="scientific">Vigna radiata var. radiata</name>
    <name type="common">Mung bean</name>
    <name type="synonym">Phaseolus aureus</name>
    <dbReference type="NCBI Taxonomy" id="3916"/>
    <lineage>
        <taxon>Eukaryota</taxon>
        <taxon>Viridiplantae</taxon>
        <taxon>Streptophyta</taxon>
        <taxon>Embryophyta</taxon>
        <taxon>Tracheophyta</taxon>
        <taxon>Spermatophyta</taxon>
        <taxon>Magnoliopsida</taxon>
        <taxon>eudicotyledons</taxon>
        <taxon>Gunneridae</taxon>
        <taxon>Pentapetalae</taxon>
        <taxon>rosids</taxon>
        <taxon>fabids</taxon>
        <taxon>Fabales</taxon>
        <taxon>Fabaceae</taxon>
        <taxon>Papilionoideae</taxon>
        <taxon>50 kb inversion clade</taxon>
        <taxon>NPAAA clade</taxon>
        <taxon>indigoferoid/millettioid clade</taxon>
        <taxon>Phaseoleae</taxon>
        <taxon>Vigna</taxon>
    </lineage>
</organism>